<dbReference type="EMBL" id="CP000458">
    <property type="protein sequence ID" value="ABK07126.1"/>
    <property type="molecule type" value="Genomic_DNA"/>
</dbReference>
<dbReference type="RefSeq" id="WP_004197937.1">
    <property type="nucleotide sequence ID" value="NC_008542.1"/>
</dbReference>
<dbReference type="SMR" id="A0K3P9"/>
<dbReference type="GeneID" id="98107136"/>
<dbReference type="KEGG" id="bch:Bcen2424_0372"/>
<dbReference type="HOGENOM" id="CLU_072439_5_0_4"/>
<dbReference type="GO" id="GO:1990904">
    <property type="term" value="C:ribonucleoprotein complex"/>
    <property type="evidence" value="ECO:0007669"/>
    <property type="project" value="UniProtKB-KW"/>
</dbReference>
<dbReference type="GO" id="GO:0005840">
    <property type="term" value="C:ribosome"/>
    <property type="evidence" value="ECO:0007669"/>
    <property type="project" value="UniProtKB-KW"/>
</dbReference>
<dbReference type="GO" id="GO:0019843">
    <property type="term" value="F:rRNA binding"/>
    <property type="evidence" value="ECO:0007669"/>
    <property type="project" value="UniProtKB-UniRule"/>
</dbReference>
<dbReference type="GO" id="GO:0003735">
    <property type="term" value="F:structural constituent of ribosome"/>
    <property type="evidence" value="ECO:0007669"/>
    <property type="project" value="InterPro"/>
</dbReference>
<dbReference type="GO" id="GO:0006412">
    <property type="term" value="P:translation"/>
    <property type="evidence" value="ECO:0007669"/>
    <property type="project" value="UniProtKB-UniRule"/>
</dbReference>
<dbReference type="FunFam" id="3.30.420.80:FF:000001">
    <property type="entry name" value="30S ribosomal protein S11"/>
    <property type="match status" value="1"/>
</dbReference>
<dbReference type="Gene3D" id="3.30.420.80">
    <property type="entry name" value="Ribosomal protein S11"/>
    <property type="match status" value="1"/>
</dbReference>
<dbReference type="HAMAP" id="MF_01310">
    <property type="entry name" value="Ribosomal_uS11"/>
    <property type="match status" value="1"/>
</dbReference>
<dbReference type="InterPro" id="IPR001971">
    <property type="entry name" value="Ribosomal_uS11"/>
</dbReference>
<dbReference type="InterPro" id="IPR019981">
    <property type="entry name" value="Ribosomal_uS11_bac-type"/>
</dbReference>
<dbReference type="InterPro" id="IPR018102">
    <property type="entry name" value="Ribosomal_uS11_CS"/>
</dbReference>
<dbReference type="InterPro" id="IPR036967">
    <property type="entry name" value="Ribosomal_uS11_sf"/>
</dbReference>
<dbReference type="NCBIfam" id="NF003698">
    <property type="entry name" value="PRK05309.1"/>
    <property type="match status" value="1"/>
</dbReference>
<dbReference type="NCBIfam" id="TIGR03632">
    <property type="entry name" value="uS11_bact"/>
    <property type="match status" value="1"/>
</dbReference>
<dbReference type="PANTHER" id="PTHR11759">
    <property type="entry name" value="40S RIBOSOMAL PROTEIN S14/30S RIBOSOMAL PROTEIN S11"/>
    <property type="match status" value="1"/>
</dbReference>
<dbReference type="Pfam" id="PF00411">
    <property type="entry name" value="Ribosomal_S11"/>
    <property type="match status" value="1"/>
</dbReference>
<dbReference type="PIRSF" id="PIRSF002131">
    <property type="entry name" value="Ribosomal_S11"/>
    <property type="match status" value="1"/>
</dbReference>
<dbReference type="SUPFAM" id="SSF53137">
    <property type="entry name" value="Translational machinery components"/>
    <property type="match status" value="1"/>
</dbReference>
<dbReference type="PROSITE" id="PS00054">
    <property type="entry name" value="RIBOSOMAL_S11"/>
    <property type="match status" value="1"/>
</dbReference>
<evidence type="ECO:0000255" key="1">
    <source>
        <dbReference type="HAMAP-Rule" id="MF_01310"/>
    </source>
</evidence>
<evidence type="ECO:0000305" key="2"/>
<feature type="chain" id="PRO_0000294727" description="Small ribosomal subunit protein uS11">
    <location>
        <begin position="1"/>
        <end position="133"/>
    </location>
</feature>
<accession>A0K3P9</accession>
<protein>
    <recommendedName>
        <fullName evidence="1">Small ribosomal subunit protein uS11</fullName>
    </recommendedName>
    <alternativeName>
        <fullName evidence="2">30S ribosomal protein S11</fullName>
    </alternativeName>
</protein>
<reference key="1">
    <citation type="submission" date="2006-08" db="EMBL/GenBank/DDBJ databases">
        <title>Complete sequence of chromosome 1 of Burkholderia cenocepacia HI2424.</title>
        <authorList>
            <person name="Copeland A."/>
            <person name="Lucas S."/>
            <person name="Lapidus A."/>
            <person name="Barry K."/>
            <person name="Detter J.C."/>
            <person name="Glavina del Rio T."/>
            <person name="Hammon N."/>
            <person name="Israni S."/>
            <person name="Pitluck S."/>
            <person name="Chain P."/>
            <person name="Malfatti S."/>
            <person name="Shin M."/>
            <person name="Vergez L."/>
            <person name="Schmutz J."/>
            <person name="Larimer F."/>
            <person name="Land M."/>
            <person name="Hauser L."/>
            <person name="Kyrpides N."/>
            <person name="Kim E."/>
            <person name="LiPuma J.J."/>
            <person name="Gonzalez C.F."/>
            <person name="Konstantinidis K."/>
            <person name="Tiedje J.M."/>
            <person name="Richardson P."/>
        </authorList>
    </citation>
    <scope>NUCLEOTIDE SEQUENCE [LARGE SCALE GENOMIC DNA]</scope>
    <source>
        <strain>HI2424</strain>
    </source>
</reference>
<gene>
    <name evidence="1" type="primary">rpsK</name>
    <name type="ordered locus">Bcen2424_0372</name>
</gene>
<organism>
    <name type="scientific">Burkholderia cenocepacia (strain HI2424)</name>
    <dbReference type="NCBI Taxonomy" id="331272"/>
    <lineage>
        <taxon>Bacteria</taxon>
        <taxon>Pseudomonadati</taxon>
        <taxon>Pseudomonadota</taxon>
        <taxon>Betaproteobacteria</taxon>
        <taxon>Burkholderiales</taxon>
        <taxon>Burkholderiaceae</taxon>
        <taxon>Burkholderia</taxon>
        <taxon>Burkholderia cepacia complex</taxon>
    </lineage>
</organism>
<name>RS11_BURCH</name>
<sequence>MAKASNTAAQRVRKKVKKNVAEGVVHVHASFNNTIITITDRQGNALAWATSGGQGFKGSRKSTPFAAQVAAESAGRVAMEYGVKNLEVRIKGPGPGRESAVRALHGLGIKITAISDVTPIPHNGCRPPKRRRI</sequence>
<comment type="function">
    <text evidence="1">Located on the platform of the 30S subunit, it bridges several disparate RNA helices of the 16S rRNA. Forms part of the Shine-Dalgarno cleft in the 70S ribosome.</text>
</comment>
<comment type="subunit">
    <text evidence="1">Part of the 30S ribosomal subunit. Interacts with proteins S7 and S18. Binds to IF-3.</text>
</comment>
<comment type="similarity">
    <text evidence="1">Belongs to the universal ribosomal protein uS11 family.</text>
</comment>
<proteinExistence type="inferred from homology"/>
<keyword id="KW-0687">Ribonucleoprotein</keyword>
<keyword id="KW-0689">Ribosomal protein</keyword>
<keyword id="KW-0694">RNA-binding</keyword>
<keyword id="KW-0699">rRNA-binding</keyword>